<gene>
    <name evidence="1" type="primary">rplR</name>
    <name type="ordered locus">LCA_1749</name>
</gene>
<name>RL18_LATSS</name>
<proteinExistence type="inferred from homology"/>
<organism>
    <name type="scientific">Latilactobacillus sakei subsp. sakei (strain 23K)</name>
    <name type="common">Lactobacillus sakei subsp. sakei</name>
    <dbReference type="NCBI Taxonomy" id="314315"/>
    <lineage>
        <taxon>Bacteria</taxon>
        <taxon>Bacillati</taxon>
        <taxon>Bacillota</taxon>
        <taxon>Bacilli</taxon>
        <taxon>Lactobacillales</taxon>
        <taxon>Lactobacillaceae</taxon>
        <taxon>Latilactobacillus</taxon>
    </lineage>
</organism>
<feature type="chain" id="PRO_0000251322" description="Large ribosomal subunit protein uL18">
    <location>
        <begin position="1"/>
        <end position="119"/>
    </location>
</feature>
<feature type="region of interest" description="Disordered" evidence="2">
    <location>
        <begin position="1"/>
        <end position="20"/>
    </location>
</feature>
<feature type="compositionally biased region" description="Basic residues" evidence="2">
    <location>
        <begin position="10"/>
        <end position="20"/>
    </location>
</feature>
<dbReference type="EMBL" id="CR936503">
    <property type="protein sequence ID" value="CAI56057.1"/>
    <property type="molecule type" value="Genomic_DNA"/>
</dbReference>
<dbReference type="RefSeq" id="WP_011375438.1">
    <property type="nucleotide sequence ID" value="NC_007576.1"/>
</dbReference>
<dbReference type="SMR" id="Q38US7"/>
<dbReference type="STRING" id="314315.LCA_1749"/>
<dbReference type="GeneID" id="57132665"/>
<dbReference type="KEGG" id="lsa:LCA_1749"/>
<dbReference type="eggNOG" id="COG0256">
    <property type="taxonomic scope" value="Bacteria"/>
</dbReference>
<dbReference type="HOGENOM" id="CLU_098841_0_1_9"/>
<dbReference type="OrthoDB" id="9810939at2"/>
<dbReference type="Proteomes" id="UP000002707">
    <property type="component" value="Chromosome"/>
</dbReference>
<dbReference type="GO" id="GO:0022625">
    <property type="term" value="C:cytosolic large ribosomal subunit"/>
    <property type="evidence" value="ECO:0007669"/>
    <property type="project" value="TreeGrafter"/>
</dbReference>
<dbReference type="GO" id="GO:0008097">
    <property type="term" value="F:5S rRNA binding"/>
    <property type="evidence" value="ECO:0007669"/>
    <property type="project" value="TreeGrafter"/>
</dbReference>
<dbReference type="GO" id="GO:0003735">
    <property type="term" value="F:structural constituent of ribosome"/>
    <property type="evidence" value="ECO:0007669"/>
    <property type="project" value="InterPro"/>
</dbReference>
<dbReference type="GO" id="GO:0006412">
    <property type="term" value="P:translation"/>
    <property type="evidence" value="ECO:0007669"/>
    <property type="project" value="UniProtKB-UniRule"/>
</dbReference>
<dbReference type="CDD" id="cd00432">
    <property type="entry name" value="Ribosomal_L18_L5e"/>
    <property type="match status" value="1"/>
</dbReference>
<dbReference type="FunFam" id="3.30.420.100:FF:000001">
    <property type="entry name" value="50S ribosomal protein L18"/>
    <property type="match status" value="1"/>
</dbReference>
<dbReference type="Gene3D" id="3.30.420.100">
    <property type="match status" value="1"/>
</dbReference>
<dbReference type="HAMAP" id="MF_01337_B">
    <property type="entry name" value="Ribosomal_uL18_B"/>
    <property type="match status" value="1"/>
</dbReference>
<dbReference type="InterPro" id="IPR004389">
    <property type="entry name" value="Ribosomal_uL18_bac-type"/>
</dbReference>
<dbReference type="InterPro" id="IPR005484">
    <property type="entry name" value="Ribosomal_uL18_bac/euk"/>
</dbReference>
<dbReference type="NCBIfam" id="TIGR00060">
    <property type="entry name" value="L18_bact"/>
    <property type="match status" value="1"/>
</dbReference>
<dbReference type="PANTHER" id="PTHR12899">
    <property type="entry name" value="39S RIBOSOMAL PROTEIN L18, MITOCHONDRIAL"/>
    <property type="match status" value="1"/>
</dbReference>
<dbReference type="PANTHER" id="PTHR12899:SF3">
    <property type="entry name" value="LARGE RIBOSOMAL SUBUNIT PROTEIN UL18M"/>
    <property type="match status" value="1"/>
</dbReference>
<dbReference type="Pfam" id="PF00861">
    <property type="entry name" value="Ribosomal_L18p"/>
    <property type="match status" value="1"/>
</dbReference>
<dbReference type="SUPFAM" id="SSF53137">
    <property type="entry name" value="Translational machinery components"/>
    <property type="match status" value="1"/>
</dbReference>
<protein>
    <recommendedName>
        <fullName evidence="1">Large ribosomal subunit protein uL18</fullName>
    </recommendedName>
    <alternativeName>
        <fullName evidence="3">50S ribosomal protein L18</fullName>
    </alternativeName>
</protein>
<evidence type="ECO:0000255" key="1">
    <source>
        <dbReference type="HAMAP-Rule" id="MF_01337"/>
    </source>
</evidence>
<evidence type="ECO:0000256" key="2">
    <source>
        <dbReference type="SAM" id="MobiDB-lite"/>
    </source>
</evidence>
<evidence type="ECO:0000305" key="3"/>
<sequence>MISKPDKNKTRQKRHTRVRGKISGTADCPRLNVFRSNKNIYAQLIDDVAGVTLASASTLDKEVKVEGTKVEQAQQVGALVAQRAVKAGHKVVVFDRGGYLYHGRIAALATAARENGLEF</sequence>
<reference key="1">
    <citation type="journal article" date="2005" name="Nat. Biotechnol.">
        <title>The complete genome sequence of the meat-borne lactic acid bacterium Lactobacillus sakei 23K.</title>
        <authorList>
            <person name="Chaillou S."/>
            <person name="Champomier-Verges M.-C."/>
            <person name="Cornet M."/>
            <person name="Crutz-Le Coq A.-M."/>
            <person name="Dudez A.-M."/>
            <person name="Martin V."/>
            <person name="Beaufils S."/>
            <person name="Darbon-Rongere E."/>
            <person name="Bossy R."/>
            <person name="Loux V."/>
            <person name="Zagorec M."/>
        </authorList>
    </citation>
    <scope>NUCLEOTIDE SEQUENCE [LARGE SCALE GENOMIC DNA]</scope>
    <source>
        <strain>23K</strain>
    </source>
</reference>
<comment type="function">
    <text evidence="1">This is one of the proteins that bind and probably mediate the attachment of the 5S RNA into the large ribosomal subunit, where it forms part of the central protuberance.</text>
</comment>
<comment type="subunit">
    <text evidence="1">Part of the 50S ribosomal subunit; part of the 5S rRNA/L5/L18/L25 subcomplex. Contacts the 5S and 23S rRNAs.</text>
</comment>
<comment type="similarity">
    <text evidence="1">Belongs to the universal ribosomal protein uL18 family.</text>
</comment>
<accession>Q38US7</accession>
<keyword id="KW-1185">Reference proteome</keyword>
<keyword id="KW-0687">Ribonucleoprotein</keyword>
<keyword id="KW-0689">Ribosomal protein</keyword>
<keyword id="KW-0694">RNA-binding</keyword>
<keyword id="KW-0699">rRNA-binding</keyword>